<protein>
    <recommendedName>
        <fullName evidence="1">Lon protease homolog 2, peroxisomal</fullName>
        <ecNumber evidence="1">3.4.21.53</ecNumber>
    </recommendedName>
</protein>
<reference key="1">
    <citation type="journal article" date="2004" name="Nature">
        <title>Genome evolution in yeasts.</title>
        <authorList>
            <person name="Dujon B."/>
            <person name="Sherman D."/>
            <person name="Fischer G."/>
            <person name="Durrens P."/>
            <person name="Casaregola S."/>
            <person name="Lafontaine I."/>
            <person name="de Montigny J."/>
            <person name="Marck C."/>
            <person name="Neuveglise C."/>
            <person name="Talla E."/>
            <person name="Goffard N."/>
            <person name="Frangeul L."/>
            <person name="Aigle M."/>
            <person name="Anthouard V."/>
            <person name="Babour A."/>
            <person name="Barbe V."/>
            <person name="Barnay S."/>
            <person name="Blanchin S."/>
            <person name="Beckerich J.-M."/>
            <person name="Beyne E."/>
            <person name="Bleykasten C."/>
            <person name="Boisrame A."/>
            <person name="Boyer J."/>
            <person name="Cattolico L."/>
            <person name="Confanioleri F."/>
            <person name="de Daruvar A."/>
            <person name="Despons L."/>
            <person name="Fabre E."/>
            <person name="Fairhead C."/>
            <person name="Ferry-Dumazet H."/>
            <person name="Groppi A."/>
            <person name="Hantraye F."/>
            <person name="Hennequin C."/>
            <person name="Jauniaux N."/>
            <person name="Joyet P."/>
            <person name="Kachouri R."/>
            <person name="Kerrest A."/>
            <person name="Koszul R."/>
            <person name="Lemaire M."/>
            <person name="Lesur I."/>
            <person name="Ma L."/>
            <person name="Muller H."/>
            <person name="Nicaud J.-M."/>
            <person name="Nikolski M."/>
            <person name="Oztas S."/>
            <person name="Ozier-Kalogeropoulos O."/>
            <person name="Pellenz S."/>
            <person name="Potier S."/>
            <person name="Richard G.-F."/>
            <person name="Straub M.-L."/>
            <person name="Suleau A."/>
            <person name="Swennen D."/>
            <person name="Tekaia F."/>
            <person name="Wesolowski-Louvel M."/>
            <person name="Westhof E."/>
            <person name="Wirth B."/>
            <person name="Zeniou-Meyer M."/>
            <person name="Zivanovic Y."/>
            <person name="Bolotin-Fukuhara M."/>
            <person name="Thierry A."/>
            <person name="Bouchier C."/>
            <person name="Caudron B."/>
            <person name="Scarpelli C."/>
            <person name="Gaillardin C."/>
            <person name="Weissenbach J."/>
            <person name="Wincker P."/>
            <person name="Souciet J.-L."/>
        </authorList>
    </citation>
    <scope>NUCLEOTIDE SEQUENCE [LARGE SCALE GENOMIC DNA]</scope>
    <source>
        <strain>ATCC 8585 / CBS 2359 / DSM 70799 / NBRC 1267 / NRRL Y-1140 / WM37</strain>
    </source>
</reference>
<feature type="chain" id="PRO_0000395795" description="Lon protease homolog 2, peroxisomal">
    <location>
        <begin position="1"/>
        <end position="1003"/>
    </location>
</feature>
<feature type="domain" description="Lon N-terminal" evidence="3">
    <location>
        <begin position="14"/>
        <end position="305"/>
    </location>
</feature>
<feature type="domain" description="Lon proteolytic" evidence="2">
    <location>
        <begin position="773"/>
        <end position="969"/>
    </location>
</feature>
<feature type="region of interest" description="Disordered" evidence="4">
    <location>
        <begin position="367"/>
        <end position="389"/>
    </location>
</feature>
<feature type="compositionally biased region" description="Polar residues" evidence="4">
    <location>
        <begin position="368"/>
        <end position="377"/>
    </location>
</feature>
<feature type="active site" evidence="1">
    <location>
        <position position="874"/>
    </location>
</feature>
<feature type="active site" evidence="1">
    <location>
        <position position="917"/>
    </location>
</feature>
<feature type="binding site" evidence="1">
    <location>
        <begin position="520"/>
        <end position="527"/>
    </location>
    <ligand>
        <name>ATP</name>
        <dbReference type="ChEBI" id="CHEBI:30616"/>
    </ligand>
</feature>
<sequence length="1003" mass="112645">MGLFFDSPGSNLYLPCFTLVDAPKLVPLPGVSYKVSFERDSIIHVLSEFKRNNSFKNNHLLDKINTAIAQNEIVVDNSVVNSCKQFHKKYGSDNSNNDAEVQMYIVLLPFEAVNNSVGAASRITAIQVEDDTITITFKSVARVENKQPLLNMQHSLWKSSILEIDDRSELRTWDHKSINKSILSFVKIFYDTDKIIKDFKSKYSLASKRSGDIDSRVLYLSPLANTLFMQLNGSHFNKSWKLLKAYLEQLTVLERNYDTCFELVSMMDLVMSILPMSLKQRLDFLTAKKLKSRAILFSTCVQDFQQIFKKLDDSVDYVNNHFSNSSNNDKSKLIANQLRALRFYIDDIKRNNSSVILKANSEKERTDVTSPNKFLKTSSSHDEDSDSNDEMEQIKSFIDSLEEKNVHPDGIKLLQKDFKRFMKMTPQNADYQVLRNYFDIVMDIPFGKTVNISTIDLAKSRAKLNEDHYGLQSVKRRLVEYLSVLKISEISTNDPNLNTDLHPKKDRASINKPPILLLVGPPGVGKTSIAKSVADVLGRKFQRISLGGIHNEAEIRGHRRTYVGSMCGLIIGALRKAGTMNPLILLDEVDKVLSGGVGGFGNRVNGDPGAALLEVLDPEQNSTFSDHYVGFPVDLSQVLFFCTANDLEGISEPLLNRMELIELPGYTPDEKIMIGSKFLLPKQIKANGLDAIKELPKIYLTDEAWNCVVLEYTREPGVRGLERRIGAIVRGKVVEYVENKMIQGEVDKEHLYKYLGLAHHPISEEILAPTEHSEKFGVVNGLSYNSDGSGSVLLFEVIKIHTDESGATNGPYIKTTGNLGNILEESIKIATSFVKHILFRGLIPGVNEKDINEFLTSEYHLHVPMGAVSKDGPSAGAAISLAILSCALKRPVSPKLCMTGEITLRGKILPIGGIKEKLLGAQFYHMNHVLVPSANLSDVVQAVSTDNQEQYEIYMDRSRQPELQKLKDKTQLQLHYCSDFFDVVKYTWPELLNKEVSHSRPSL</sequence>
<name>LONP2_KLULA</name>
<evidence type="ECO:0000255" key="1">
    <source>
        <dbReference type="HAMAP-Rule" id="MF_03121"/>
    </source>
</evidence>
<evidence type="ECO:0000255" key="2">
    <source>
        <dbReference type="PROSITE-ProRule" id="PRU01122"/>
    </source>
</evidence>
<evidence type="ECO:0000255" key="3">
    <source>
        <dbReference type="PROSITE-ProRule" id="PRU01123"/>
    </source>
</evidence>
<evidence type="ECO:0000256" key="4">
    <source>
        <dbReference type="SAM" id="MobiDB-lite"/>
    </source>
</evidence>
<organism>
    <name type="scientific">Kluyveromyces lactis (strain ATCC 8585 / CBS 2359 / DSM 70799 / NBRC 1267 / NRRL Y-1140 / WM37)</name>
    <name type="common">Yeast</name>
    <name type="synonym">Candida sphaerica</name>
    <dbReference type="NCBI Taxonomy" id="284590"/>
    <lineage>
        <taxon>Eukaryota</taxon>
        <taxon>Fungi</taxon>
        <taxon>Dikarya</taxon>
        <taxon>Ascomycota</taxon>
        <taxon>Saccharomycotina</taxon>
        <taxon>Saccharomycetes</taxon>
        <taxon>Saccharomycetales</taxon>
        <taxon>Saccharomycetaceae</taxon>
        <taxon>Kluyveromyces</taxon>
    </lineage>
</organism>
<accession>Q6CWS4</accession>
<dbReference type="EC" id="3.4.21.53" evidence="1"/>
<dbReference type="EMBL" id="CR382122">
    <property type="protein sequence ID" value="CAH02008.1"/>
    <property type="molecule type" value="Genomic_DNA"/>
</dbReference>
<dbReference type="RefSeq" id="XP_451615.1">
    <property type="nucleotide sequence ID" value="XM_451615.1"/>
</dbReference>
<dbReference type="SMR" id="Q6CWS4"/>
<dbReference type="STRING" id="284590.Q6CWS4"/>
<dbReference type="PaxDb" id="284590-Q6CWS4"/>
<dbReference type="KEGG" id="kla:KLLA0_B01892g"/>
<dbReference type="eggNOG" id="KOG2004">
    <property type="taxonomic scope" value="Eukaryota"/>
</dbReference>
<dbReference type="HOGENOM" id="CLU_004109_4_0_1"/>
<dbReference type="InParanoid" id="Q6CWS4"/>
<dbReference type="OMA" id="RCMNPVI"/>
<dbReference type="Proteomes" id="UP000000598">
    <property type="component" value="Chromosome B"/>
</dbReference>
<dbReference type="GO" id="GO:0005782">
    <property type="term" value="C:peroxisomal matrix"/>
    <property type="evidence" value="ECO:0007669"/>
    <property type="project" value="UniProtKB-SubCell"/>
</dbReference>
<dbReference type="GO" id="GO:0005524">
    <property type="term" value="F:ATP binding"/>
    <property type="evidence" value="ECO:0007669"/>
    <property type="project" value="UniProtKB-UniRule"/>
</dbReference>
<dbReference type="GO" id="GO:0016887">
    <property type="term" value="F:ATP hydrolysis activity"/>
    <property type="evidence" value="ECO:0007669"/>
    <property type="project" value="UniProtKB-UniRule"/>
</dbReference>
<dbReference type="GO" id="GO:0004176">
    <property type="term" value="F:ATP-dependent peptidase activity"/>
    <property type="evidence" value="ECO:0007669"/>
    <property type="project" value="UniProtKB-UniRule"/>
</dbReference>
<dbReference type="GO" id="GO:0004252">
    <property type="term" value="F:serine-type endopeptidase activity"/>
    <property type="evidence" value="ECO:0007669"/>
    <property type="project" value="UniProtKB-UniRule"/>
</dbReference>
<dbReference type="GO" id="GO:0016558">
    <property type="term" value="P:protein import into peroxisome matrix"/>
    <property type="evidence" value="ECO:0007669"/>
    <property type="project" value="UniProtKB-UniRule"/>
</dbReference>
<dbReference type="GO" id="GO:0016485">
    <property type="term" value="P:protein processing"/>
    <property type="evidence" value="ECO:0007669"/>
    <property type="project" value="UniProtKB-UniRule"/>
</dbReference>
<dbReference type="GO" id="GO:0006515">
    <property type="term" value="P:protein quality control for misfolded or incompletely synthesized proteins"/>
    <property type="evidence" value="ECO:0007669"/>
    <property type="project" value="UniProtKB-UniRule"/>
</dbReference>
<dbReference type="CDD" id="cd19500">
    <property type="entry name" value="RecA-like_Lon"/>
    <property type="match status" value="1"/>
</dbReference>
<dbReference type="FunFam" id="3.40.50.300:FF:000021">
    <property type="entry name" value="Lon protease homolog"/>
    <property type="match status" value="1"/>
</dbReference>
<dbReference type="Gene3D" id="1.10.8.60">
    <property type="match status" value="1"/>
</dbReference>
<dbReference type="Gene3D" id="3.30.230.10">
    <property type="match status" value="1"/>
</dbReference>
<dbReference type="Gene3D" id="3.40.50.300">
    <property type="entry name" value="P-loop containing nucleotide triphosphate hydrolases"/>
    <property type="match status" value="1"/>
</dbReference>
<dbReference type="HAMAP" id="MF_03121">
    <property type="entry name" value="lonp2_euk"/>
    <property type="match status" value="1"/>
</dbReference>
<dbReference type="InterPro" id="IPR003593">
    <property type="entry name" value="AAA+_ATPase"/>
</dbReference>
<dbReference type="InterPro" id="IPR003959">
    <property type="entry name" value="ATPase_AAA_core"/>
</dbReference>
<dbReference type="InterPro" id="IPR054594">
    <property type="entry name" value="Lon_lid"/>
</dbReference>
<dbReference type="InterPro" id="IPR008269">
    <property type="entry name" value="Lon_proteolytic"/>
</dbReference>
<dbReference type="InterPro" id="IPR027065">
    <property type="entry name" value="Lon_Prtase"/>
</dbReference>
<dbReference type="InterPro" id="IPR003111">
    <property type="entry name" value="Lon_prtase_N"/>
</dbReference>
<dbReference type="InterPro" id="IPR027501">
    <property type="entry name" value="Lonp2_euk"/>
</dbReference>
<dbReference type="InterPro" id="IPR027417">
    <property type="entry name" value="P-loop_NTPase"/>
</dbReference>
<dbReference type="InterPro" id="IPR008268">
    <property type="entry name" value="Peptidase_S16_AS"/>
</dbReference>
<dbReference type="InterPro" id="IPR020568">
    <property type="entry name" value="Ribosomal_Su5_D2-typ_SF"/>
</dbReference>
<dbReference type="InterPro" id="IPR014721">
    <property type="entry name" value="Ribsml_uS5_D2-typ_fold_subgr"/>
</dbReference>
<dbReference type="PANTHER" id="PTHR10046">
    <property type="entry name" value="ATP DEPENDENT LON PROTEASE FAMILY MEMBER"/>
    <property type="match status" value="1"/>
</dbReference>
<dbReference type="Pfam" id="PF00004">
    <property type="entry name" value="AAA"/>
    <property type="match status" value="1"/>
</dbReference>
<dbReference type="Pfam" id="PF05362">
    <property type="entry name" value="Lon_C"/>
    <property type="match status" value="1"/>
</dbReference>
<dbReference type="Pfam" id="PF22667">
    <property type="entry name" value="Lon_lid"/>
    <property type="match status" value="1"/>
</dbReference>
<dbReference type="PRINTS" id="PR00830">
    <property type="entry name" value="ENDOLAPTASE"/>
</dbReference>
<dbReference type="SMART" id="SM00382">
    <property type="entry name" value="AAA"/>
    <property type="match status" value="1"/>
</dbReference>
<dbReference type="SUPFAM" id="SSF52540">
    <property type="entry name" value="P-loop containing nucleoside triphosphate hydrolases"/>
    <property type="match status" value="1"/>
</dbReference>
<dbReference type="SUPFAM" id="SSF54211">
    <property type="entry name" value="Ribosomal protein S5 domain 2-like"/>
    <property type="match status" value="1"/>
</dbReference>
<dbReference type="PROSITE" id="PS51787">
    <property type="entry name" value="LON_N"/>
    <property type="match status" value="1"/>
</dbReference>
<dbReference type="PROSITE" id="PS51786">
    <property type="entry name" value="LON_PROTEOLYTIC"/>
    <property type="match status" value="1"/>
</dbReference>
<dbReference type="PROSITE" id="PS01046">
    <property type="entry name" value="LON_SER"/>
    <property type="match status" value="1"/>
</dbReference>
<gene>
    <name type="ordered locus">KLLA0B01892g</name>
</gene>
<comment type="function">
    <text evidence="1">ATP-dependent serine protease that mediates the selective degradation of misfolded and unassembled polypeptides in the peroxisomal matrix. Necessary for type 2 peroxisome targeting signal (PTS2)-containing protein processing and facilitates peroxisome matrix protein import.</text>
</comment>
<comment type="catalytic activity">
    <reaction evidence="1">
        <text>Hydrolysis of proteins in presence of ATP.</text>
        <dbReference type="EC" id="3.4.21.53"/>
    </reaction>
</comment>
<comment type="subcellular location">
    <subcellularLocation>
        <location evidence="1">Peroxisome matrix</location>
    </subcellularLocation>
</comment>
<comment type="similarity">
    <text evidence="1">Belongs to the peptidase S16 family.</text>
</comment>
<keyword id="KW-0067">ATP-binding</keyword>
<keyword id="KW-0378">Hydrolase</keyword>
<keyword id="KW-0547">Nucleotide-binding</keyword>
<keyword id="KW-0576">Peroxisome</keyword>
<keyword id="KW-0645">Protease</keyword>
<keyword id="KW-1185">Reference proteome</keyword>
<keyword id="KW-0720">Serine protease</keyword>
<proteinExistence type="inferred from homology"/>